<dbReference type="EMBL" id="U00090">
    <property type="protein sequence ID" value="AAB91657.1"/>
    <property type="molecule type" value="Genomic_DNA"/>
</dbReference>
<dbReference type="RefSeq" id="NP_443845.1">
    <property type="nucleotide sequence ID" value="NC_000914.2"/>
</dbReference>
<dbReference type="RefSeq" id="WP_010875393.1">
    <property type="nucleotide sequence ID" value="NC_000914.2"/>
</dbReference>
<dbReference type="SMR" id="P55438"/>
<dbReference type="KEGG" id="rhi:NGR_a03810"/>
<dbReference type="PATRIC" id="fig|394.7.peg.390"/>
<dbReference type="eggNOG" id="COG2442">
    <property type="taxonomic scope" value="Bacteria"/>
</dbReference>
<dbReference type="HOGENOM" id="CLU_108922_0_0_5"/>
<dbReference type="OrthoDB" id="200074at2"/>
<dbReference type="Proteomes" id="UP000001054">
    <property type="component" value="Plasmid pNGR234a"/>
</dbReference>
<dbReference type="Gene3D" id="1.10.10.10">
    <property type="entry name" value="Winged helix-like DNA-binding domain superfamily/Winged helix DNA-binding domain"/>
    <property type="match status" value="1"/>
</dbReference>
<dbReference type="InterPro" id="IPR007367">
    <property type="entry name" value="DUF433"/>
</dbReference>
<dbReference type="InterPro" id="IPR009057">
    <property type="entry name" value="Homeodomain-like_sf"/>
</dbReference>
<dbReference type="InterPro" id="IPR036388">
    <property type="entry name" value="WH-like_DNA-bd_sf"/>
</dbReference>
<dbReference type="PANTHER" id="PTHR34849">
    <property type="entry name" value="SSL5025 PROTEIN"/>
    <property type="match status" value="1"/>
</dbReference>
<dbReference type="PANTHER" id="PTHR34849:SF3">
    <property type="entry name" value="SSR2962 PROTEIN"/>
    <property type="match status" value="1"/>
</dbReference>
<dbReference type="Pfam" id="PF04255">
    <property type="entry name" value="DUF433"/>
    <property type="match status" value="1"/>
</dbReference>
<dbReference type="SUPFAM" id="SSF46689">
    <property type="entry name" value="Homeodomain-like"/>
    <property type="match status" value="1"/>
</dbReference>
<protein>
    <recommendedName>
        <fullName>Uncharacterized protein y4eO</fullName>
    </recommendedName>
</protein>
<gene>
    <name type="ordered locus">NGR_a03810</name>
    <name type="ORF">y4eO</name>
</gene>
<organism>
    <name type="scientific">Sinorhizobium fredii (strain NBRC 101917 / NGR234)</name>
    <dbReference type="NCBI Taxonomy" id="394"/>
    <lineage>
        <taxon>Bacteria</taxon>
        <taxon>Pseudomonadati</taxon>
        <taxon>Pseudomonadota</taxon>
        <taxon>Alphaproteobacteria</taxon>
        <taxon>Hyphomicrobiales</taxon>
        <taxon>Rhizobiaceae</taxon>
        <taxon>Sinorhizobium/Ensifer group</taxon>
        <taxon>Sinorhizobium</taxon>
    </lineage>
</organism>
<geneLocation type="plasmid">
    <name>sym pNGR234a</name>
</geneLocation>
<sequence length="221" mass="24508">MEAHMPAVAEMLKASEAAVVSRVSLRDVNRVIDEHILPEAFVSLDNGRHVLAGACSLIAFYFESARRLTSEERLFAIRIAEGRLARARTLPWSALLREDWTVHHEFLTIDLMPFMRGASERLDDLAAAREIVTSSPDILGGTPVVRGTRVPVYDVAASVAAGHSVERMLEAWPSLDAEKIRLASIYAEANPLRGRRRVFGDLPEGSVIVSDRRVARRRKTG</sequence>
<name>Y4EO_SINFN</name>
<feature type="chain" id="PRO_0000200833" description="Uncharacterized protein y4eO">
    <location>
        <begin position="1"/>
        <end position="221"/>
    </location>
</feature>
<reference key="1">
    <citation type="journal article" date="1997" name="Nature">
        <title>Molecular basis of symbiosis between Rhizobium and legumes.</title>
        <authorList>
            <person name="Freiberg C.A."/>
            <person name="Fellay R."/>
            <person name="Bairoch A."/>
            <person name="Broughton W.J."/>
            <person name="Rosenthal A."/>
            <person name="Perret X."/>
        </authorList>
    </citation>
    <scope>NUCLEOTIDE SEQUENCE [LARGE SCALE GENOMIC DNA]</scope>
    <source>
        <strain>NBRC 101917 / NGR234</strain>
    </source>
</reference>
<reference key="2">
    <citation type="journal article" date="2009" name="Appl. Environ. Microbiol.">
        <title>Rhizobium sp. strain NGR234 possesses a remarkable number of secretion systems.</title>
        <authorList>
            <person name="Schmeisser C."/>
            <person name="Liesegang H."/>
            <person name="Krysciak D."/>
            <person name="Bakkou N."/>
            <person name="Le Quere A."/>
            <person name="Wollherr A."/>
            <person name="Heinemeyer I."/>
            <person name="Morgenstern B."/>
            <person name="Pommerening-Roeser A."/>
            <person name="Flores M."/>
            <person name="Palacios R."/>
            <person name="Brenner S."/>
            <person name="Gottschalk G."/>
            <person name="Schmitz R.A."/>
            <person name="Broughton W.J."/>
            <person name="Perret X."/>
            <person name="Strittmatter A.W."/>
            <person name="Streit W.R."/>
        </authorList>
    </citation>
    <scope>NUCLEOTIDE SEQUENCE [LARGE SCALE GENOMIC DNA]</scope>
    <source>
        <strain>NBRC 101917 / NGR234</strain>
    </source>
</reference>
<accession>P55438</accession>
<keyword id="KW-0614">Plasmid</keyword>
<keyword id="KW-1185">Reference proteome</keyword>
<proteinExistence type="predicted"/>